<dbReference type="EC" id="1.6.5.2" evidence="1"/>
<dbReference type="EMBL" id="AL590842">
    <property type="protein sequence ID" value="CAL18874.1"/>
    <property type="molecule type" value="Genomic_DNA"/>
</dbReference>
<dbReference type="EMBL" id="AE009952">
    <property type="protein sequence ID" value="AAM87515.1"/>
    <property type="molecule type" value="Genomic_DNA"/>
</dbReference>
<dbReference type="EMBL" id="AE017042">
    <property type="protein sequence ID" value="AAS60464.1"/>
    <property type="molecule type" value="Genomic_DNA"/>
</dbReference>
<dbReference type="PIR" id="AI0023">
    <property type="entry name" value="AI0023"/>
</dbReference>
<dbReference type="RefSeq" id="YP_002345272.1">
    <property type="nucleotide sequence ID" value="NC_003143.1"/>
</dbReference>
<dbReference type="SMR" id="Q8ZJC5"/>
<dbReference type="IntAct" id="Q8ZJC5">
    <property type="interactions" value="1"/>
</dbReference>
<dbReference type="STRING" id="214092.YPO0190"/>
<dbReference type="PaxDb" id="214092-YPO0190"/>
<dbReference type="DNASU" id="1148918"/>
<dbReference type="EnsemblBacteria" id="AAS60464">
    <property type="protein sequence ID" value="AAS60464"/>
    <property type="gene ID" value="YP_0188"/>
</dbReference>
<dbReference type="KEGG" id="ype:YPO0190"/>
<dbReference type="KEGG" id="ypk:y3971"/>
<dbReference type="KEGG" id="ypm:YP_0188"/>
<dbReference type="PATRIC" id="fig|214092.21.peg.422"/>
<dbReference type="eggNOG" id="COG2249">
    <property type="taxonomic scope" value="Bacteria"/>
</dbReference>
<dbReference type="HOGENOM" id="CLU_058643_0_1_6"/>
<dbReference type="OMA" id="RYPMSDI"/>
<dbReference type="OrthoDB" id="9798454at2"/>
<dbReference type="Proteomes" id="UP000000815">
    <property type="component" value="Chromosome"/>
</dbReference>
<dbReference type="Proteomes" id="UP000001019">
    <property type="component" value="Chromosome"/>
</dbReference>
<dbReference type="Proteomes" id="UP000002490">
    <property type="component" value="Chromosome"/>
</dbReference>
<dbReference type="GO" id="GO:0005886">
    <property type="term" value="C:plasma membrane"/>
    <property type="evidence" value="ECO:0007669"/>
    <property type="project" value="UniProtKB-SubCell"/>
</dbReference>
<dbReference type="GO" id="GO:0009055">
    <property type="term" value="F:electron transfer activity"/>
    <property type="evidence" value="ECO:0000318"/>
    <property type="project" value="GO_Central"/>
</dbReference>
<dbReference type="GO" id="GO:0010181">
    <property type="term" value="F:FMN binding"/>
    <property type="evidence" value="ECO:0000318"/>
    <property type="project" value="GO_Central"/>
</dbReference>
<dbReference type="GO" id="GO:0003955">
    <property type="term" value="F:NAD(P)H dehydrogenase (quinone) activity"/>
    <property type="evidence" value="ECO:0000318"/>
    <property type="project" value="GO_Central"/>
</dbReference>
<dbReference type="GO" id="GO:0050136">
    <property type="term" value="F:NADH:ubiquinone reductase (non-electrogenic) activity"/>
    <property type="evidence" value="ECO:0007669"/>
    <property type="project" value="RHEA"/>
</dbReference>
<dbReference type="GO" id="GO:0008753">
    <property type="term" value="F:NADPH dehydrogenase (quinone) activity"/>
    <property type="evidence" value="ECO:0007669"/>
    <property type="project" value="RHEA"/>
</dbReference>
<dbReference type="GO" id="GO:1901381">
    <property type="term" value="P:positive regulation of potassium ion transmembrane transport"/>
    <property type="evidence" value="ECO:0007669"/>
    <property type="project" value="UniProtKB-UniRule"/>
</dbReference>
<dbReference type="GO" id="GO:0006813">
    <property type="term" value="P:potassium ion transport"/>
    <property type="evidence" value="ECO:0007669"/>
    <property type="project" value="InterPro"/>
</dbReference>
<dbReference type="FunFam" id="3.40.50.360:FF:000013">
    <property type="entry name" value="Glutathione-regulated potassium-efflux system ancillary protein KefG"/>
    <property type="match status" value="1"/>
</dbReference>
<dbReference type="Gene3D" id="3.40.50.360">
    <property type="match status" value="1"/>
</dbReference>
<dbReference type="HAMAP" id="MF_01415">
    <property type="entry name" value="K_H_efflux_KefG"/>
    <property type="match status" value="1"/>
</dbReference>
<dbReference type="InterPro" id="IPR003680">
    <property type="entry name" value="Flavodoxin_fold"/>
</dbReference>
<dbReference type="InterPro" id="IPR029039">
    <property type="entry name" value="Flavoprotein-like_sf"/>
</dbReference>
<dbReference type="InterPro" id="IPR023947">
    <property type="entry name" value="K_H_efflux_KefG"/>
</dbReference>
<dbReference type="InterPro" id="IPR046980">
    <property type="entry name" value="KefG/KefF"/>
</dbReference>
<dbReference type="NCBIfam" id="NF003430">
    <property type="entry name" value="PRK04930.1"/>
    <property type="match status" value="1"/>
</dbReference>
<dbReference type="PANTHER" id="PTHR47307">
    <property type="entry name" value="GLUTATHIONE-REGULATED POTASSIUM-EFFLUX SYSTEM ANCILLARY PROTEIN KEFG"/>
    <property type="match status" value="1"/>
</dbReference>
<dbReference type="PANTHER" id="PTHR47307:SF1">
    <property type="entry name" value="GLUTATHIONE-REGULATED POTASSIUM-EFFLUX SYSTEM ANCILLARY PROTEIN KEFG"/>
    <property type="match status" value="1"/>
</dbReference>
<dbReference type="Pfam" id="PF02525">
    <property type="entry name" value="Flavodoxin_2"/>
    <property type="match status" value="1"/>
</dbReference>
<dbReference type="SUPFAM" id="SSF52218">
    <property type="entry name" value="Flavoproteins"/>
    <property type="match status" value="1"/>
</dbReference>
<accession>Q8ZJC5</accession>
<accession>Q0WKB6</accession>
<proteinExistence type="inferred from homology"/>
<gene>
    <name evidence="1" type="primary">kefG</name>
    <name type="ordered locus">YPO0190</name>
    <name type="ordered locus">y3971</name>
    <name type="ordered locus">YP_0188</name>
</gene>
<keyword id="KW-0997">Cell inner membrane</keyword>
<keyword id="KW-1003">Cell membrane</keyword>
<keyword id="KW-0472">Membrane</keyword>
<keyword id="KW-0520">NAD</keyword>
<keyword id="KW-0560">Oxidoreductase</keyword>
<keyword id="KW-1185">Reference proteome</keyword>
<sequence>MMLQPPKVLLLYAHPESQDSVANRVLLQPVQQLEHVTVHDLYAHYPDFFIDIHHEQQLLRDHQVIVFQHPLYTYSCPALLKEWLDRVLARGFANGVGGHALTGKHWRSVITTGEQEGTYRIGGYNRYPMEDILRPFELTAAMCHMHWINPMIIYWARRQKPETLASHAQAYVQWLQSPLTRGL</sequence>
<protein>
    <recommendedName>
        <fullName evidence="1">Glutathione-regulated potassium-efflux system ancillary protein KefG</fullName>
    </recommendedName>
    <alternativeName>
        <fullName evidence="1">Putative quinone oxidoreductase KefG</fullName>
        <ecNumber evidence="1">1.6.5.2</ecNumber>
    </alternativeName>
</protein>
<evidence type="ECO:0000255" key="1">
    <source>
        <dbReference type="HAMAP-Rule" id="MF_01415"/>
    </source>
</evidence>
<comment type="function">
    <text evidence="1">Regulatory subunit of a potassium efflux system that confers protection against electrophiles. Required for full activity of KefB.</text>
</comment>
<comment type="catalytic activity">
    <reaction evidence="1">
        <text>a quinone + NADH + H(+) = a quinol + NAD(+)</text>
        <dbReference type="Rhea" id="RHEA:46160"/>
        <dbReference type="ChEBI" id="CHEBI:15378"/>
        <dbReference type="ChEBI" id="CHEBI:24646"/>
        <dbReference type="ChEBI" id="CHEBI:57540"/>
        <dbReference type="ChEBI" id="CHEBI:57945"/>
        <dbReference type="ChEBI" id="CHEBI:132124"/>
        <dbReference type="EC" id="1.6.5.2"/>
    </reaction>
</comment>
<comment type="catalytic activity">
    <reaction evidence="1">
        <text>a quinone + NADPH + H(+) = a quinol + NADP(+)</text>
        <dbReference type="Rhea" id="RHEA:46164"/>
        <dbReference type="ChEBI" id="CHEBI:15378"/>
        <dbReference type="ChEBI" id="CHEBI:24646"/>
        <dbReference type="ChEBI" id="CHEBI:57783"/>
        <dbReference type="ChEBI" id="CHEBI:58349"/>
        <dbReference type="ChEBI" id="CHEBI:132124"/>
        <dbReference type="EC" id="1.6.5.2"/>
    </reaction>
</comment>
<comment type="subunit">
    <text evidence="1">Interacts with KefB.</text>
</comment>
<comment type="subcellular location">
    <subcellularLocation>
        <location evidence="1">Cell inner membrane</location>
        <topology evidence="1">Peripheral membrane protein</topology>
        <orientation evidence="1">Cytoplasmic side</orientation>
    </subcellularLocation>
</comment>
<comment type="similarity">
    <text evidence="1">Belongs to the NAD(P)H dehydrogenase (quinone) family. KefG subfamily.</text>
</comment>
<name>KEFG_YERPE</name>
<feature type="chain" id="PRO_0000071650" description="Glutathione-regulated potassium-efflux system ancillary protein KefG">
    <location>
        <begin position="1"/>
        <end position="183"/>
    </location>
</feature>
<reference key="1">
    <citation type="journal article" date="2001" name="Nature">
        <title>Genome sequence of Yersinia pestis, the causative agent of plague.</title>
        <authorList>
            <person name="Parkhill J."/>
            <person name="Wren B.W."/>
            <person name="Thomson N.R."/>
            <person name="Titball R.W."/>
            <person name="Holden M.T.G."/>
            <person name="Prentice M.B."/>
            <person name="Sebaihia M."/>
            <person name="James K.D."/>
            <person name="Churcher C.M."/>
            <person name="Mungall K.L."/>
            <person name="Baker S."/>
            <person name="Basham D."/>
            <person name="Bentley S.D."/>
            <person name="Brooks K."/>
            <person name="Cerdeno-Tarraga A.-M."/>
            <person name="Chillingworth T."/>
            <person name="Cronin A."/>
            <person name="Davies R.M."/>
            <person name="Davis P."/>
            <person name="Dougan G."/>
            <person name="Feltwell T."/>
            <person name="Hamlin N."/>
            <person name="Holroyd S."/>
            <person name="Jagels K."/>
            <person name="Karlyshev A.V."/>
            <person name="Leather S."/>
            <person name="Moule S."/>
            <person name="Oyston P.C.F."/>
            <person name="Quail M.A."/>
            <person name="Rutherford K.M."/>
            <person name="Simmonds M."/>
            <person name="Skelton J."/>
            <person name="Stevens K."/>
            <person name="Whitehead S."/>
            <person name="Barrell B.G."/>
        </authorList>
    </citation>
    <scope>NUCLEOTIDE SEQUENCE [LARGE SCALE GENOMIC DNA]</scope>
    <source>
        <strain>CO-92 / Biovar Orientalis</strain>
    </source>
</reference>
<reference key="2">
    <citation type="journal article" date="2002" name="J. Bacteriol.">
        <title>Genome sequence of Yersinia pestis KIM.</title>
        <authorList>
            <person name="Deng W."/>
            <person name="Burland V."/>
            <person name="Plunkett G. III"/>
            <person name="Boutin A."/>
            <person name="Mayhew G.F."/>
            <person name="Liss P."/>
            <person name="Perna N.T."/>
            <person name="Rose D.J."/>
            <person name="Mau B."/>
            <person name="Zhou S."/>
            <person name="Schwartz D.C."/>
            <person name="Fetherston J.D."/>
            <person name="Lindler L.E."/>
            <person name="Brubaker R.R."/>
            <person name="Plano G.V."/>
            <person name="Straley S.C."/>
            <person name="McDonough K.A."/>
            <person name="Nilles M.L."/>
            <person name="Matson J.S."/>
            <person name="Blattner F.R."/>
            <person name="Perry R.D."/>
        </authorList>
    </citation>
    <scope>NUCLEOTIDE SEQUENCE [LARGE SCALE GENOMIC DNA]</scope>
    <source>
        <strain>KIM10+ / Biovar Mediaevalis</strain>
    </source>
</reference>
<reference key="3">
    <citation type="journal article" date="2004" name="DNA Res.">
        <title>Complete genome sequence of Yersinia pestis strain 91001, an isolate avirulent to humans.</title>
        <authorList>
            <person name="Song Y."/>
            <person name="Tong Z."/>
            <person name="Wang J."/>
            <person name="Wang L."/>
            <person name="Guo Z."/>
            <person name="Han Y."/>
            <person name="Zhang J."/>
            <person name="Pei D."/>
            <person name="Zhou D."/>
            <person name="Qin H."/>
            <person name="Pang X."/>
            <person name="Han Y."/>
            <person name="Zhai J."/>
            <person name="Li M."/>
            <person name="Cui B."/>
            <person name="Qi Z."/>
            <person name="Jin L."/>
            <person name="Dai R."/>
            <person name="Chen F."/>
            <person name="Li S."/>
            <person name="Ye C."/>
            <person name="Du Z."/>
            <person name="Lin W."/>
            <person name="Wang J."/>
            <person name="Yu J."/>
            <person name="Yang H."/>
            <person name="Wang J."/>
            <person name="Huang P."/>
            <person name="Yang R."/>
        </authorList>
    </citation>
    <scope>NUCLEOTIDE SEQUENCE [LARGE SCALE GENOMIC DNA]</scope>
    <source>
        <strain>91001 / Biovar Mediaevalis</strain>
    </source>
</reference>
<organism>
    <name type="scientific">Yersinia pestis</name>
    <dbReference type="NCBI Taxonomy" id="632"/>
    <lineage>
        <taxon>Bacteria</taxon>
        <taxon>Pseudomonadati</taxon>
        <taxon>Pseudomonadota</taxon>
        <taxon>Gammaproteobacteria</taxon>
        <taxon>Enterobacterales</taxon>
        <taxon>Yersiniaceae</taxon>
        <taxon>Yersinia</taxon>
    </lineage>
</organism>